<gene>
    <name evidence="1" type="primary">uppS2</name>
    <name type="ordered locus">all3432</name>
</gene>
<feature type="chain" id="PRO_0000123562" description="Isoprenyl transferase 2">
    <location>
        <begin position="1"/>
        <end position="258"/>
    </location>
</feature>
<feature type="region of interest" description="Disordered" evidence="2">
    <location>
        <begin position="1"/>
        <end position="21"/>
    </location>
</feature>
<feature type="compositionally biased region" description="Pro residues" evidence="2">
    <location>
        <begin position="1"/>
        <end position="18"/>
    </location>
</feature>
<feature type="active site" evidence="1">
    <location>
        <position position="32"/>
    </location>
</feature>
<feature type="active site" description="Proton acceptor" evidence="1">
    <location>
        <position position="80"/>
    </location>
</feature>
<feature type="binding site" evidence="1">
    <location>
        <position position="32"/>
    </location>
    <ligand>
        <name>Mg(2+)</name>
        <dbReference type="ChEBI" id="CHEBI:18420"/>
    </ligand>
</feature>
<feature type="binding site" evidence="1">
    <location>
        <begin position="33"/>
        <end position="36"/>
    </location>
    <ligand>
        <name>substrate</name>
    </ligand>
</feature>
<feature type="binding site" evidence="1">
    <location>
        <position position="37"/>
    </location>
    <ligand>
        <name>substrate</name>
    </ligand>
</feature>
<feature type="binding site" evidence="1">
    <location>
        <position position="45"/>
    </location>
    <ligand>
        <name>substrate</name>
    </ligand>
</feature>
<feature type="binding site" evidence="1">
    <location>
        <position position="49"/>
    </location>
    <ligand>
        <name>substrate</name>
    </ligand>
</feature>
<feature type="binding site" evidence="1">
    <location>
        <begin position="77"/>
        <end position="79"/>
    </location>
    <ligand>
        <name>substrate</name>
    </ligand>
</feature>
<feature type="binding site" evidence="1">
    <location>
        <position position="81"/>
    </location>
    <ligand>
        <name>substrate</name>
    </ligand>
</feature>
<feature type="binding site" evidence="1">
    <location>
        <position position="83"/>
    </location>
    <ligand>
        <name>substrate</name>
    </ligand>
</feature>
<feature type="binding site" evidence="1">
    <location>
        <position position="200"/>
    </location>
    <ligand>
        <name>substrate</name>
    </ligand>
</feature>
<feature type="binding site" evidence="1">
    <location>
        <begin position="206"/>
        <end position="208"/>
    </location>
    <ligand>
        <name>substrate</name>
    </ligand>
</feature>
<feature type="binding site" evidence="1">
    <location>
        <position position="219"/>
    </location>
    <ligand>
        <name>Mg(2+)</name>
        <dbReference type="ChEBI" id="CHEBI:18420"/>
    </ligand>
</feature>
<protein>
    <recommendedName>
        <fullName evidence="1">Isoprenyl transferase 2</fullName>
        <ecNumber evidence="1">2.5.1.-</ecNumber>
    </recommendedName>
</protein>
<dbReference type="EC" id="2.5.1.-" evidence="1"/>
<dbReference type="EMBL" id="BA000019">
    <property type="protein sequence ID" value="BAB75131.1"/>
    <property type="molecule type" value="Genomic_DNA"/>
</dbReference>
<dbReference type="PIR" id="AI2234">
    <property type="entry name" value="AI2234"/>
</dbReference>
<dbReference type="SMR" id="Q8YRL4"/>
<dbReference type="STRING" id="103690.gene:10495471"/>
<dbReference type="KEGG" id="ana:all3432"/>
<dbReference type="eggNOG" id="COG0020">
    <property type="taxonomic scope" value="Bacteria"/>
</dbReference>
<dbReference type="Proteomes" id="UP000002483">
    <property type="component" value="Chromosome"/>
</dbReference>
<dbReference type="GO" id="GO:0045547">
    <property type="term" value="F:ditrans,polycis-polyprenyl diphosphate synthase [(2E,6E)-farnesyl diphosphate specific] activity"/>
    <property type="evidence" value="ECO:0007669"/>
    <property type="project" value="TreeGrafter"/>
</dbReference>
<dbReference type="GO" id="GO:0000287">
    <property type="term" value="F:magnesium ion binding"/>
    <property type="evidence" value="ECO:0007669"/>
    <property type="project" value="UniProtKB-UniRule"/>
</dbReference>
<dbReference type="GO" id="GO:0016094">
    <property type="term" value="P:polyprenol biosynthetic process"/>
    <property type="evidence" value="ECO:0007669"/>
    <property type="project" value="TreeGrafter"/>
</dbReference>
<dbReference type="CDD" id="cd00475">
    <property type="entry name" value="Cis_IPPS"/>
    <property type="match status" value="1"/>
</dbReference>
<dbReference type="FunFam" id="3.40.1180.10:FF:000001">
    <property type="entry name" value="(2E,6E)-farnesyl-diphosphate-specific ditrans,polycis-undecaprenyl-diphosphate synthase"/>
    <property type="match status" value="1"/>
</dbReference>
<dbReference type="Gene3D" id="3.40.1180.10">
    <property type="entry name" value="Decaprenyl diphosphate synthase-like"/>
    <property type="match status" value="1"/>
</dbReference>
<dbReference type="HAMAP" id="MF_01139">
    <property type="entry name" value="ISPT"/>
    <property type="match status" value="1"/>
</dbReference>
<dbReference type="InterPro" id="IPR001441">
    <property type="entry name" value="UPP_synth-like"/>
</dbReference>
<dbReference type="InterPro" id="IPR018520">
    <property type="entry name" value="UPP_synth-like_CS"/>
</dbReference>
<dbReference type="InterPro" id="IPR036424">
    <property type="entry name" value="UPP_synth-like_sf"/>
</dbReference>
<dbReference type="NCBIfam" id="NF011405">
    <property type="entry name" value="PRK14830.1"/>
    <property type="match status" value="1"/>
</dbReference>
<dbReference type="NCBIfam" id="NF011406">
    <property type="entry name" value="PRK14831.1"/>
    <property type="match status" value="1"/>
</dbReference>
<dbReference type="NCBIfam" id="TIGR00055">
    <property type="entry name" value="uppS"/>
    <property type="match status" value="1"/>
</dbReference>
<dbReference type="PANTHER" id="PTHR10291:SF0">
    <property type="entry name" value="DEHYDRODOLICHYL DIPHOSPHATE SYNTHASE 2"/>
    <property type="match status" value="1"/>
</dbReference>
<dbReference type="PANTHER" id="PTHR10291">
    <property type="entry name" value="DEHYDRODOLICHYL DIPHOSPHATE SYNTHASE FAMILY MEMBER"/>
    <property type="match status" value="1"/>
</dbReference>
<dbReference type="Pfam" id="PF01255">
    <property type="entry name" value="Prenyltransf"/>
    <property type="match status" value="1"/>
</dbReference>
<dbReference type="SUPFAM" id="SSF64005">
    <property type="entry name" value="Undecaprenyl diphosphate synthase"/>
    <property type="match status" value="1"/>
</dbReference>
<dbReference type="PROSITE" id="PS01066">
    <property type="entry name" value="UPP_SYNTHASE"/>
    <property type="match status" value="1"/>
</dbReference>
<comment type="function">
    <text evidence="1">Catalyzes the condensation of isopentenyl diphosphate (IPP) with allylic pyrophosphates generating different type of terpenoids.</text>
</comment>
<comment type="cofactor">
    <cofactor evidence="1">
        <name>Mg(2+)</name>
        <dbReference type="ChEBI" id="CHEBI:18420"/>
    </cofactor>
    <text evidence="1">Binds 2 magnesium ions per subunit.</text>
</comment>
<comment type="subunit">
    <text evidence="1">Homodimer.</text>
</comment>
<comment type="similarity">
    <text evidence="1">Belongs to the UPP synthase family.</text>
</comment>
<accession>Q8YRL4</accession>
<proteinExistence type="inferred from homology"/>
<evidence type="ECO:0000255" key="1">
    <source>
        <dbReference type="HAMAP-Rule" id="MF_01139"/>
    </source>
</evidence>
<evidence type="ECO:0000256" key="2">
    <source>
        <dbReference type="SAM" id="MobiDB-lite"/>
    </source>
</evidence>
<name>ISPT2_NOSS1</name>
<organism>
    <name type="scientific">Nostoc sp. (strain PCC 7120 / SAG 25.82 / UTEX 2576)</name>
    <dbReference type="NCBI Taxonomy" id="103690"/>
    <lineage>
        <taxon>Bacteria</taxon>
        <taxon>Bacillati</taxon>
        <taxon>Cyanobacteriota</taxon>
        <taxon>Cyanophyceae</taxon>
        <taxon>Nostocales</taxon>
        <taxon>Nostocaceae</taxon>
        <taxon>Nostoc</taxon>
    </lineage>
</organism>
<reference key="1">
    <citation type="journal article" date="2001" name="DNA Res.">
        <title>Complete genomic sequence of the filamentous nitrogen-fixing cyanobacterium Anabaena sp. strain PCC 7120.</title>
        <authorList>
            <person name="Kaneko T."/>
            <person name="Nakamura Y."/>
            <person name="Wolk C.P."/>
            <person name="Kuritz T."/>
            <person name="Sasamoto S."/>
            <person name="Watanabe A."/>
            <person name="Iriguchi M."/>
            <person name="Ishikawa A."/>
            <person name="Kawashima K."/>
            <person name="Kimura T."/>
            <person name="Kishida Y."/>
            <person name="Kohara M."/>
            <person name="Matsumoto M."/>
            <person name="Matsuno A."/>
            <person name="Muraki A."/>
            <person name="Nakazaki N."/>
            <person name="Shimpo S."/>
            <person name="Sugimoto M."/>
            <person name="Takazawa M."/>
            <person name="Yamada M."/>
            <person name="Yasuda M."/>
            <person name="Tabata S."/>
        </authorList>
    </citation>
    <scope>NUCLEOTIDE SEQUENCE [LARGE SCALE GENOMIC DNA]</scope>
    <source>
        <strain>PCC 7120 / SAG 25.82 / UTEX 2576</strain>
    </source>
</reference>
<sequence length="258" mass="29747">MNFPPIHPSTPKMTPPDLDPQKIPQHIAVIMDGNGRWATSRGLPRIAGHRQGARTLKELLRCCKDWGIKALTAYAFSTENWQRPIEEVDFLMLLFERLLRRELSQMHREGVRISFIGDLTALPKSLQTEMERSMTETLNNQAIHFTVAVNYGSRNEITRACRQVAELVQQGKLSADAVNEGIVEQHLYTTDTQPPDLLIRTSGEMRLSNFLLWQMAYTEMYFTDILWPDFDREAFHQALLSYQKRDRRFGQVKALISA</sequence>
<keyword id="KW-0460">Magnesium</keyword>
<keyword id="KW-0479">Metal-binding</keyword>
<keyword id="KW-1185">Reference proteome</keyword>
<keyword id="KW-0808">Transferase</keyword>